<sequence length="1066" mass="122594">MTNFKFTLLARSIAFALNASTAYAAQPTNQPTNQPTNQPTNQPTNQPTNQPTNQDSNLSEQLEQINVSGSTETINVKEKKVGETQISAKKLAKQQASDSRDLVRYETGITVVETGRTGASGYAVRGVDENRVGIMVDGLRQAETLSSQGFKELFEGYGNFNNTRNNIEIENVKTATITKGADSLKSGSGALGGSVIFETKDARDYLIDKDYYVSYKRGYQTMNNQNLKTLTLAGRSKKFDILVVDTTRDGHEIENYDYKIYPNKQADLSAVGPTREKADPYQITRQSTLIKLGFQPNENHRLSVALDDSTLETKGMDLSYAFRPYSQADKEIYGERIINDQSKRKNIQFSYENFSQTPFWDHIKLSYSSQKITNKARSDEYCHQSTCNGVSNPQGLHLVEEKGVYKIVDKDNKDFNYQEDKNNPWSYGKELYNSKNEKISNDVDTEGGALDSVLINCEKLNCEKKKFPIYKEKDEEWKDKYEHEDRDITIKELNGKKYGEISLKKSDSSGFTKYESARFLFPKSFGYSTDFVNDRDLNTNTQQIKLDLDKEFHLWHAQHQLKYGGLYEKTLKSMVNHQYNTAANVQWWADYFFCKKPVNGNRIPAPDHSAYRCKLMNSDIGKDTYLIPVTTKNNVLYFGDNVQLTSWLGLDLNYRYDHVKYLPSYDKNIPVPNGLITGLFKKFKSTDYVYGNKYLVPKGYTNCTYTTDCYKQNFEENLALLLRKTDYKHHSYNLGLNLDPTNWLRVQLKYANGFRAPTSDEIYMTFKHPQFSIQPNTDLKAETSKTKEVAFTFYKNSSYITLNAFQNDYRNFIDLVEVGERPIEEGSVVRYPFHQNQNRDRARVRGIEIASRLEMGDLLEKLQRFPLGYKFTYQKGRIKDNGLHPKYKEFLELNKDEHPEYEAIARKPQPMNALQPTTSVYNIGYDAPSQKWGVDMYITNVAAKKAKDSFNSQWTSMVARKEKIYDTESTVPAKKANGKEVKDSRGLWRNNRYTVIDTIAYWKPIKNLTFTAGVYNLTNKKYLTWDSARSVRHLGTINRVETATGKGLNRLYAPGRNYRMSVQFEF</sequence>
<reference key="1">
    <citation type="journal article" date="1999" name="Infect. Immun.">
        <title>Effect of multiple mutations in the hemoglobin- and hemoglobin-haptoglobin-binding proteins, HgpA, HgpB, and HgpC, of Haemophilus influenzae type b.</title>
        <authorList>
            <person name="Morton D.J."/>
            <person name="Whitby P.W."/>
            <person name="Stull T.L."/>
        </authorList>
    </citation>
    <scope>NUCLEOTIDE SEQUENCE [GENOMIC DNA]</scope>
    <source>
        <strain>HI689 / Serotype B</strain>
    </source>
</reference>
<accession>Q9X442</accession>
<comment type="function">
    <text>Acts as a receptor for hemoglobin or the hemoglobin/haptoglobin complex of the human host and is required for heme uptake.</text>
</comment>
<comment type="subcellular location">
    <subcellularLocation>
        <location evidence="2">Cell outer membrane</location>
        <topology evidence="2">Multi-pass membrane protein</topology>
    </subcellularLocation>
</comment>
<comment type="miscellaneous">
    <text>This protein is subject to phase-variable expression associated with alteration in the length of the CCAA repeat region. This mechanism is called slipped-strand mispairing. Addition or loss of CCAA repeat units would change the reading frame and result in introduction of stop codons downstream of the repeat region. This may be a mechanism of regulation and a way to avoid the immunological response of the host.</text>
</comment>
<comment type="similarity">
    <text evidence="4">Belongs to the TonB-dependent receptor family. Hemoglobin/haptoglobin binding protein subfamily.</text>
</comment>
<evidence type="ECO:0000255" key="1"/>
<evidence type="ECO:0000255" key="2">
    <source>
        <dbReference type="PROSITE-ProRule" id="PRU01360"/>
    </source>
</evidence>
<evidence type="ECO:0000256" key="3">
    <source>
        <dbReference type="SAM" id="MobiDB-lite"/>
    </source>
</evidence>
<evidence type="ECO:0000305" key="4"/>
<gene>
    <name type="primary">hgpC</name>
</gene>
<name>HGPC_HAEIF</name>
<keyword id="KW-0998">Cell outer membrane</keyword>
<keyword id="KW-0472">Membrane</keyword>
<keyword id="KW-0675">Receptor</keyword>
<keyword id="KW-0677">Repeat</keyword>
<keyword id="KW-0732">Signal</keyword>
<keyword id="KW-0798">TonB box</keyword>
<keyword id="KW-0812">Transmembrane</keyword>
<keyword id="KW-1134">Transmembrane beta strand</keyword>
<keyword id="KW-0813">Transport</keyword>
<organism>
    <name type="scientific">Haemophilus influenzae</name>
    <dbReference type="NCBI Taxonomy" id="727"/>
    <lineage>
        <taxon>Bacteria</taxon>
        <taxon>Pseudomonadati</taxon>
        <taxon>Pseudomonadota</taxon>
        <taxon>Gammaproteobacteria</taxon>
        <taxon>Pasteurellales</taxon>
        <taxon>Pasteurellaceae</taxon>
        <taxon>Haemophilus</taxon>
    </lineage>
</organism>
<protein>
    <recommendedName>
        <fullName>Hemoglobin and hemoglobin-haptoglobin-binding protein C</fullName>
    </recommendedName>
</protein>
<feature type="signal peptide" evidence="1">
    <location>
        <begin position="1"/>
        <end position="24"/>
    </location>
</feature>
<feature type="chain" id="PRO_0000034780" description="Hemoglobin and hemoglobin-haptoglobin-binding protein C">
    <location>
        <begin position="25"/>
        <end position="1066"/>
    </location>
</feature>
<feature type="repeat" description="1">
    <location>
        <begin position="26"/>
        <end position="29"/>
    </location>
</feature>
<feature type="repeat" description="2">
    <location>
        <begin position="30"/>
        <end position="33"/>
    </location>
</feature>
<feature type="repeat" description="3">
    <location>
        <begin position="34"/>
        <end position="37"/>
    </location>
</feature>
<feature type="repeat" description="4">
    <location>
        <begin position="38"/>
        <end position="41"/>
    </location>
</feature>
<feature type="repeat" description="5">
    <location>
        <begin position="42"/>
        <end position="45"/>
    </location>
</feature>
<feature type="repeat" description="6">
    <location>
        <begin position="46"/>
        <end position="49"/>
    </location>
</feature>
<feature type="repeat" description="7">
    <location>
        <begin position="50"/>
        <end position="53"/>
    </location>
</feature>
<feature type="domain" description="TBDR plug" evidence="2">
    <location>
        <begin position="66"/>
        <end position="200"/>
    </location>
</feature>
<feature type="domain" description="TBDR beta-barrel" evidence="2">
    <location>
        <begin position="208"/>
        <end position="1066"/>
    </location>
</feature>
<feature type="region of interest" description="Disordered" evidence="3">
    <location>
        <begin position="26"/>
        <end position="57"/>
    </location>
</feature>
<feature type="region of interest" description="7 X 4 AA tandem repeats of Q-P-T-N">
    <location>
        <begin position="26"/>
        <end position="53"/>
    </location>
</feature>
<feature type="short sequence motif" description="TonB box">
    <location>
        <begin position="63"/>
        <end position="70"/>
    </location>
</feature>
<feature type="short sequence motif" description="TonB C-terminal box">
    <location>
        <begin position="1049"/>
        <end position="1066"/>
    </location>
</feature>
<feature type="compositionally biased region" description="Low complexity" evidence="3">
    <location>
        <begin position="26"/>
        <end position="54"/>
    </location>
</feature>
<proteinExistence type="inferred from homology"/>
<dbReference type="EMBL" id="AF094574">
    <property type="protein sequence ID" value="AAD33112.1"/>
    <property type="molecule type" value="Genomic_DNA"/>
</dbReference>
<dbReference type="SMR" id="Q9X442"/>
<dbReference type="GO" id="GO:0009279">
    <property type="term" value="C:cell outer membrane"/>
    <property type="evidence" value="ECO:0007669"/>
    <property type="project" value="UniProtKB-SubCell"/>
</dbReference>
<dbReference type="GO" id="GO:0015344">
    <property type="term" value="F:siderophore uptake transmembrane transporter activity"/>
    <property type="evidence" value="ECO:0007669"/>
    <property type="project" value="TreeGrafter"/>
</dbReference>
<dbReference type="Gene3D" id="2.40.170.20">
    <property type="entry name" value="TonB-dependent receptor, beta-barrel domain"/>
    <property type="match status" value="2"/>
</dbReference>
<dbReference type="Gene3D" id="2.170.130.10">
    <property type="entry name" value="TonB-dependent receptor, plug domain"/>
    <property type="match status" value="1"/>
</dbReference>
<dbReference type="InterPro" id="IPR012910">
    <property type="entry name" value="Plug_dom"/>
</dbReference>
<dbReference type="InterPro" id="IPR037066">
    <property type="entry name" value="Plug_dom_sf"/>
</dbReference>
<dbReference type="InterPro" id="IPR006970">
    <property type="entry name" value="PT"/>
</dbReference>
<dbReference type="InterPro" id="IPR039426">
    <property type="entry name" value="TonB-dep_rcpt-like"/>
</dbReference>
<dbReference type="InterPro" id="IPR000531">
    <property type="entry name" value="TonB-dep_rcpt_b-brl"/>
</dbReference>
<dbReference type="InterPro" id="IPR036942">
    <property type="entry name" value="TonB_rcpt_b-brl_sf"/>
</dbReference>
<dbReference type="InterPro" id="IPR010917">
    <property type="entry name" value="TonB_rcpt_CS"/>
</dbReference>
<dbReference type="PANTHER" id="PTHR30069:SF29">
    <property type="entry name" value="HEMOGLOBIN AND HEMOGLOBIN-HAPTOGLOBIN-BINDING PROTEIN 1-RELATED"/>
    <property type="match status" value="1"/>
</dbReference>
<dbReference type="PANTHER" id="PTHR30069">
    <property type="entry name" value="TONB-DEPENDENT OUTER MEMBRANE RECEPTOR"/>
    <property type="match status" value="1"/>
</dbReference>
<dbReference type="Pfam" id="PF07715">
    <property type="entry name" value="Plug"/>
    <property type="match status" value="1"/>
</dbReference>
<dbReference type="Pfam" id="PF04886">
    <property type="entry name" value="PT"/>
    <property type="match status" value="1"/>
</dbReference>
<dbReference type="Pfam" id="PF00593">
    <property type="entry name" value="TonB_dep_Rec_b-barrel"/>
    <property type="match status" value="1"/>
</dbReference>
<dbReference type="SUPFAM" id="SSF56935">
    <property type="entry name" value="Porins"/>
    <property type="match status" value="1"/>
</dbReference>
<dbReference type="PROSITE" id="PS01156">
    <property type="entry name" value="TONB_DEPENDENT_REC_2"/>
    <property type="match status" value="1"/>
</dbReference>
<dbReference type="PROSITE" id="PS52016">
    <property type="entry name" value="TONB_DEPENDENT_REC_3"/>
    <property type="match status" value="1"/>
</dbReference>